<accession>Q8DZK0</accession>
<sequence length="226" mass="25841">MYHIELKKEALLPRERLVDLGADRLSNQELLAILLRTGIKEKPVLEISTQILENISSLADFGQLSLQELQSIKGIGQVKSVEIKAMLELAKRIHKAEYDRKEQILSSEQLARKMMLELGDKKQEHLVAIYMDTQNRIIEQRTIFIGTVRRSVAEPREILHYACKNMATSLIIIHNHPSGSPKPSESDLSFTKKIKRSCDHLGIVCLDHIIVGKNKYYSFREEADIL</sequence>
<organism>
    <name type="scientific">Streptococcus agalactiae serotype V (strain ATCC BAA-611 / 2603 V/R)</name>
    <dbReference type="NCBI Taxonomy" id="208435"/>
    <lineage>
        <taxon>Bacteria</taxon>
        <taxon>Bacillati</taxon>
        <taxon>Bacillota</taxon>
        <taxon>Bacilli</taxon>
        <taxon>Lactobacillales</taxon>
        <taxon>Streptococcaceae</taxon>
        <taxon>Streptococcus</taxon>
    </lineage>
</organism>
<dbReference type="EMBL" id="AE009948">
    <property type="protein sequence ID" value="AAM99982.1"/>
    <property type="molecule type" value="Genomic_DNA"/>
</dbReference>
<dbReference type="RefSeq" id="NP_688110.1">
    <property type="nucleotide sequence ID" value="NC_004116.1"/>
</dbReference>
<dbReference type="SMR" id="Q8DZK0"/>
<dbReference type="STRING" id="208435.SAG1101"/>
<dbReference type="KEGG" id="sag:SAG1101"/>
<dbReference type="PATRIC" id="fig|208435.3.peg.1109"/>
<dbReference type="HOGENOM" id="CLU_073529_0_2_9"/>
<dbReference type="OrthoDB" id="9804482at2"/>
<dbReference type="Proteomes" id="UP000000821">
    <property type="component" value="Chromosome"/>
</dbReference>
<dbReference type="GO" id="GO:0046872">
    <property type="term" value="F:metal ion binding"/>
    <property type="evidence" value="ECO:0007669"/>
    <property type="project" value="UniProtKB-KW"/>
</dbReference>
<dbReference type="GO" id="GO:0008237">
    <property type="term" value="F:metallopeptidase activity"/>
    <property type="evidence" value="ECO:0007669"/>
    <property type="project" value="UniProtKB-KW"/>
</dbReference>
<dbReference type="GO" id="GO:0006508">
    <property type="term" value="P:proteolysis"/>
    <property type="evidence" value="ECO:0007669"/>
    <property type="project" value="UniProtKB-KW"/>
</dbReference>
<dbReference type="CDD" id="cd08071">
    <property type="entry name" value="MPN_DUF2466"/>
    <property type="match status" value="1"/>
</dbReference>
<dbReference type="Gene3D" id="3.40.140.10">
    <property type="entry name" value="Cytidine Deaminase, domain 2"/>
    <property type="match status" value="1"/>
</dbReference>
<dbReference type="InterPro" id="IPR037518">
    <property type="entry name" value="MPN"/>
</dbReference>
<dbReference type="InterPro" id="IPR025657">
    <property type="entry name" value="RadC_JAB"/>
</dbReference>
<dbReference type="InterPro" id="IPR001405">
    <property type="entry name" value="UPF0758"/>
</dbReference>
<dbReference type="InterPro" id="IPR020891">
    <property type="entry name" value="UPF0758_CS"/>
</dbReference>
<dbReference type="InterPro" id="IPR046778">
    <property type="entry name" value="UPF0758_N"/>
</dbReference>
<dbReference type="NCBIfam" id="NF000642">
    <property type="entry name" value="PRK00024.1"/>
    <property type="match status" value="1"/>
</dbReference>
<dbReference type="NCBIfam" id="TIGR00608">
    <property type="entry name" value="radc"/>
    <property type="match status" value="1"/>
</dbReference>
<dbReference type="PANTHER" id="PTHR30471">
    <property type="entry name" value="DNA REPAIR PROTEIN RADC"/>
    <property type="match status" value="1"/>
</dbReference>
<dbReference type="PANTHER" id="PTHR30471:SF3">
    <property type="entry name" value="UPF0758 PROTEIN YEES-RELATED"/>
    <property type="match status" value="1"/>
</dbReference>
<dbReference type="Pfam" id="PF04002">
    <property type="entry name" value="RadC"/>
    <property type="match status" value="1"/>
</dbReference>
<dbReference type="Pfam" id="PF20582">
    <property type="entry name" value="UPF0758_N"/>
    <property type="match status" value="1"/>
</dbReference>
<dbReference type="SUPFAM" id="SSF102712">
    <property type="entry name" value="JAB1/MPN domain"/>
    <property type="match status" value="1"/>
</dbReference>
<dbReference type="PROSITE" id="PS50249">
    <property type="entry name" value="MPN"/>
    <property type="match status" value="1"/>
</dbReference>
<dbReference type="PROSITE" id="PS01302">
    <property type="entry name" value="UPF0758"/>
    <property type="match status" value="1"/>
</dbReference>
<proteinExistence type="inferred from homology"/>
<comment type="similarity">
    <text evidence="2">Belongs to the UPF0758 family.</text>
</comment>
<gene>
    <name type="ordered locus">SAG1101</name>
</gene>
<keyword id="KW-0378">Hydrolase</keyword>
<keyword id="KW-0479">Metal-binding</keyword>
<keyword id="KW-0482">Metalloprotease</keyword>
<keyword id="KW-0645">Protease</keyword>
<keyword id="KW-1185">Reference proteome</keyword>
<keyword id="KW-0862">Zinc</keyword>
<reference key="1">
    <citation type="journal article" date="2002" name="Proc. Natl. Acad. Sci. U.S.A.">
        <title>Complete genome sequence and comparative genomic analysis of an emerging human pathogen, serotype V Streptococcus agalactiae.</title>
        <authorList>
            <person name="Tettelin H."/>
            <person name="Masignani V."/>
            <person name="Cieslewicz M.J."/>
            <person name="Eisen J.A."/>
            <person name="Peterson S.N."/>
            <person name="Wessels M.R."/>
            <person name="Paulsen I.T."/>
            <person name="Nelson K.E."/>
            <person name="Margarit I."/>
            <person name="Read T.D."/>
            <person name="Madoff L.C."/>
            <person name="Wolf A.M."/>
            <person name="Beanan M.J."/>
            <person name="Brinkac L.M."/>
            <person name="Daugherty S.C."/>
            <person name="DeBoy R.T."/>
            <person name="Durkin A.S."/>
            <person name="Kolonay J.F."/>
            <person name="Madupu R."/>
            <person name="Lewis M.R."/>
            <person name="Radune D."/>
            <person name="Fedorova N.B."/>
            <person name="Scanlan D."/>
            <person name="Khouri H.M."/>
            <person name="Mulligan S."/>
            <person name="Carty H.A."/>
            <person name="Cline R.T."/>
            <person name="Van Aken S.E."/>
            <person name="Gill J."/>
            <person name="Scarselli M."/>
            <person name="Mora M."/>
            <person name="Iacobini E.T."/>
            <person name="Brettoni C."/>
            <person name="Galli G."/>
            <person name="Mariani M."/>
            <person name="Vegni F."/>
            <person name="Maione D."/>
            <person name="Rinaudo D."/>
            <person name="Rappuoli R."/>
            <person name="Telford J.L."/>
            <person name="Kasper D.L."/>
            <person name="Grandi G."/>
            <person name="Fraser C.M."/>
        </authorList>
    </citation>
    <scope>NUCLEOTIDE SEQUENCE [LARGE SCALE GENOMIC DNA]</scope>
    <source>
        <strain>ATCC BAA-611 / 2603 V/R</strain>
    </source>
</reference>
<evidence type="ECO:0000255" key="1">
    <source>
        <dbReference type="PROSITE-ProRule" id="PRU01182"/>
    </source>
</evidence>
<evidence type="ECO:0000305" key="2"/>
<name>Y1101_STRA5</name>
<protein>
    <recommendedName>
        <fullName>UPF0758 protein SAG1101</fullName>
    </recommendedName>
</protein>
<feature type="chain" id="PRO_0000190736" description="UPF0758 protein SAG1101">
    <location>
        <begin position="1"/>
        <end position="226"/>
    </location>
</feature>
<feature type="domain" description="MPN" evidence="1">
    <location>
        <begin position="103"/>
        <end position="225"/>
    </location>
</feature>
<feature type="short sequence motif" description="JAMM motif" evidence="1">
    <location>
        <begin position="174"/>
        <end position="187"/>
    </location>
</feature>
<feature type="binding site" evidence="1">
    <location>
        <position position="174"/>
    </location>
    <ligand>
        <name>Zn(2+)</name>
        <dbReference type="ChEBI" id="CHEBI:29105"/>
        <note>catalytic</note>
    </ligand>
</feature>
<feature type="binding site" evidence="1">
    <location>
        <position position="176"/>
    </location>
    <ligand>
        <name>Zn(2+)</name>
        <dbReference type="ChEBI" id="CHEBI:29105"/>
        <note>catalytic</note>
    </ligand>
</feature>
<feature type="binding site" evidence="1">
    <location>
        <position position="187"/>
    </location>
    <ligand>
        <name>Zn(2+)</name>
        <dbReference type="ChEBI" id="CHEBI:29105"/>
        <note>catalytic</note>
    </ligand>
</feature>